<name>OBG_CERS1</name>
<evidence type="ECO:0000255" key="1">
    <source>
        <dbReference type="HAMAP-Rule" id="MF_01454"/>
    </source>
</evidence>
<evidence type="ECO:0000255" key="2">
    <source>
        <dbReference type="PROSITE-ProRule" id="PRU01231"/>
    </source>
</evidence>
<proteinExistence type="inferred from homology"/>
<comment type="function">
    <text evidence="1">An essential GTPase which binds GTP, GDP and possibly (p)ppGpp with moderate affinity, with high nucleotide exchange rates and a fairly low GTP hydrolysis rate. Plays a role in control of the cell cycle, stress response, ribosome biogenesis and in those bacteria that undergo differentiation, in morphogenesis control.</text>
</comment>
<comment type="cofactor">
    <cofactor evidence="1">
        <name>Mg(2+)</name>
        <dbReference type="ChEBI" id="CHEBI:18420"/>
    </cofactor>
</comment>
<comment type="subunit">
    <text evidence="1">Monomer.</text>
</comment>
<comment type="subcellular location">
    <subcellularLocation>
        <location evidence="1">Cytoplasm</location>
    </subcellularLocation>
</comment>
<comment type="similarity">
    <text evidence="1">Belongs to the TRAFAC class OBG-HflX-like GTPase superfamily. OBG GTPase family.</text>
</comment>
<sequence length="342" mass="36383">MKFLDLCKVYIRSGGGGGGCVSFRREKFIEFGGPDGGDGGNGGSVWAEAVDGLNTLIDFRYQQHFFAKSGQPGMGSQRTGRSGDDIVLKVPVGTEIIDEDEETVIADLTEVGQRVLLAQGGNGGWGNLRFKSSTNRAPARANPGQPGIDRTIWLRLKLIADAGLLGLPNAGKSTFLSATSNARPKIADYPFTTLVPNLGVVGVDGKEFVIADIPGLIEGASEGRGLGDQFLAHVERCSVLLHLVDGTSSTIVKDYRTIIGELEAYGGDLALKPRITAMNKIDAMDSRQISDRRRALEKATGGKVFTISGVAGTGLMDVLRALWAEIDGARGDKVEEHAPWQP</sequence>
<gene>
    <name evidence="1" type="primary">obg</name>
    <name type="ordered locus">Rsph17029_3514</name>
</gene>
<organism>
    <name type="scientific">Cereibacter sphaeroides (strain ATCC 17029 / ATH 2.4.9)</name>
    <name type="common">Rhodobacter sphaeroides</name>
    <dbReference type="NCBI Taxonomy" id="349101"/>
    <lineage>
        <taxon>Bacteria</taxon>
        <taxon>Pseudomonadati</taxon>
        <taxon>Pseudomonadota</taxon>
        <taxon>Alphaproteobacteria</taxon>
        <taxon>Rhodobacterales</taxon>
        <taxon>Paracoccaceae</taxon>
        <taxon>Cereibacter</taxon>
    </lineage>
</organism>
<protein>
    <recommendedName>
        <fullName evidence="1">GTPase Obg</fullName>
        <ecNumber evidence="1">3.6.5.-</ecNumber>
    </recommendedName>
    <alternativeName>
        <fullName evidence="1">GTP-binding protein Obg</fullName>
    </alternativeName>
</protein>
<keyword id="KW-0963">Cytoplasm</keyword>
<keyword id="KW-0342">GTP-binding</keyword>
<keyword id="KW-0378">Hydrolase</keyword>
<keyword id="KW-0460">Magnesium</keyword>
<keyword id="KW-0479">Metal-binding</keyword>
<keyword id="KW-0547">Nucleotide-binding</keyword>
<accession>A3PQJ0</accession>
<dbReference type="EC" id="3.6.5.-" evidence="1"/>
<dbReference type="EMBL" id="CP000578">
    <property type="protein sequence ID" value="ABN78606.1"/>
    <property type="molecule type" value="Genomic_DNA"/>
</dbReference>
<dbReference type="SMR" id="A3PQJ0"/>
<dbReference type="KEGG" id="rsh:Rsph17029_3514"/>
<dbReference type="HOGENOM" id="CLU_011747_2_0_5"/>
<dbReference type="GO" id="GO:0005737">
    <property type="term" value="C:cytoplasm"/>
    <property type="evidence" value="ECO:0007669"/>
    <property type="project" value="UniProtKB-SubCell"/>
</dbReference>
<dbReference type="GO" id="GO:0005525">
    <property type="term" value="F:GTP binding"/>
    <property type="evidence" value="ECO:0007669"/>
    <property type="project" value="UniProtKB-UniRule"/>
</dbReference>
<dbReference type="GO" id="GO:0003924">
    <property type="term" value="F:GTPase activity"/>
    <property type="evidence" value="ECO:0007669"/>
    <property type="project" value="UniProtKB-UniRule"/>
</dbReference>
<dbReference type="GO" id="GO:0000287">
    <property type="term" value="F:magnesium ion binding"/>
    <property type="evidence" value="ECO:0007669"/>
    <property type="project" value="InterPro"/>
</dbReference>
<dbReference type="GO" id="GO:0042254">
    <property type="term" value="P:ribosome biogenesis"/>
    <property type="evidence" value="ECO:0007669"/>
    <property type="project" value="UniProtKB-UniRule"/>
</dbReference>
<dbReference type="CDD" id="cd01898">
    <property type="entry name" value="Obg"/>
    <property type="match status" value="1"/>
</dbReference>
<dbReference type="FunFam" id="2.70.210.12:FF:000001">
    <property type="entry name" value="GTPase Obg"/>
    <property type="match status" value="1"/>
</dbReference>
<dbReference type="Gene3D" id="2.70.210.12">
    <property type="entry name" value="GTP1/OBG domain"/>
    <property type="match status" value="1"/>
</dbReference>
<dbReference type="Gene3D" id="3.40.50.300">
    <property type="entry name" value="P-loop containing nucleotide triphosphate hydrolases"/>
    <property type="match status" value="1"/>
</dbReference>
<dbReference type="HAMAP" id="MF_01454">
    <property type="entry name" value="GTPase_Obg"/>
    <property type="match status" value="1"/>
</dbReference>
<dbReference type="InterPro" id="IPR031167">
    <property type="entry name" value="G_OBG"/>
</dbReference>
<dbReference type="InterPro" id="IPR006073">
    <property type="entry name" value="GTP-bd"/>
</dbReference>
<dbReference type="InterPro" id="IPR014100">
    <property type="entry name" value="GTP-bd_Obg/CgtA"/>
</dbReference>
<dbReference type="InterPro" id="IPR006074">
    <property type="entry name" value="GTP1-OBG_CS"/>
</dbReference>
<dbReference type="InterPro" id="IPR006169">
    <property type="entry name" value="GTP1_OBG_dom"/>
</dbReference>
<dbReference type="InterPro" id="IPR036726">
    <property type="entry name" value="GTP1_OBG_dom_sf"/>
</dbReference>
<dbReference type="InterPro" id="IPR045086">
    <property type="entry name" value="OBG_GTPase"/>
</dbReference>
<dbReference type="InterPro" id="IPR027417">
    <property type="entry name" value="P-loop_NTPase"/>
</dbReference>
<dbReference type="NCBIfam" id="TIGR02729">
    <property type="entry name" value="Obg_CgtA"/>
    <property type="match status" value="1"/>
</dbReference>
<dbReference type="NCBIfam" id="NF008955">
    <property type="entry name" value="PRK12297.1"/>
    <property type="match status" value="1"/>
</dbReference>
<dbReference type="NCBIfam" id="NF008956">
    <property type="entry name" value="PRK12299.1"/>
    <property type="match status" value="1"/>
</dbReference>
<dbReference type="PANTHER" id="PTHR11702">
    <property type="entry name" value="DEVELOPMENTALLY REGULATED GTP-BINDING PROTEIN-RELATED"/>
    <property type="match status" value="1"/>
</dbReference>
<dbReference type="PANTHER" id="PTHR11702:SF31">
    <property type="entry name" value="MITOCHONDRIAL RIBOSOME-ASSOCIATED GTPASE 2"/>
    <property type="match status" value="1"/>
</dbReference>
<dbReference type="Pfam" id="PF01018">
    <property type="entry name" value="GTP1_OBG"/>
    <property type="match status" value="1"/>
</dbReference>
<dbReference type="Pfam" id="PF01926">
    <property type="entry name" value="MMR_HSR1"/>
    <property type="match status" value="1"/>
</dbReference>
<dbReference type="PIRSF" id="PIRSF002401">
    <property type="entry name" value="GTP_bd_Obg/CgtA"/>
    <property type="match status" value="1"/>
</dbReference>
<dbReference type="PRINTS" id="PR00326">
    <property type="entry name" value="GTP1OBG"/>
</dbReference>
<dbReference type="SUPFAM" id="SSF82051">
    <property type="entry name" value="Obg GTP-binding protein N-terminal domain"/>
    <property type="match status" value="1"/>
</dbReference>
<dbReference type="SUPFAM" id="SSF52540">
    <property type="entry name" value="P-loop containing nucleoside triphosphate hydrolases"/>
    <property type="match status" value="1"/>
</dbReference>
<dbReference type="PROSITE" id="PS51710">
    <property type="entry name" value="G_OBG"/>
    <property type="match status" value="1"/>
</dbReference>
<dbReference type="PROSITE" id="PS00905">
    <property type="entry name" value="GTP1_OBG"/>
    <property type="match status" value="1"/>
</dbReference>
<dbReference type="PROSITE" id="PS51883">
    <property type="entry name" value="OBG"/>
    <property type="match status" value="1"/>
</dbReference>
<reference key="1">
    <citation type="submission" date="2007-02" db="EMBL/GenBank/DDBJ databases">
        <title>Complete sequence of chromosome 2 of Rhodobacter sphaeroides ATCC 17029.</title>
        <authorList>
            <person name="Copeland A."/>
            <person name="Lucas S."/>
            <person name="Lapidus A."/>
            <person name="Barry K."/>
            <person name="Detter J.C."/>
            <person name="Glavina del Rio T."/>
            <person name="Hammon N."/>
            <person name="Israni S."/>
            <person name="Dalin E."/>
            <person name="Tice H."/>
            <person name="Pitluck S."/>
            <person name="Kiss H."/>
            <person name="Brettin T."/>
            <person name="Bruce D."/>
            <person name="Han C."/>
            <person name="Tapia R."/>
            <person name="Gilna P."/>
            <person name="Schmutz J."/>
            <person name="Larimer F."/>
            <person name="Land M."/>
            <person name="Hauser L."/>
            <person name="Kyrpides N."/>
            <person name="Mikhailova N."/>
            <person name="Richardson P."/>
            <person name="Mackenzie C."/>
            <person name="Choudhary M."/>
            <person name="Donohue T.J."/>
            <person name="Kaplan S."/>
        </authorList>
    </citation>
    <scope>NUCLEOTIDE SEQUENCE [LARGE SCALE GENOMIC DNA]</scope>
    <source>
        <strain>ATCC 17029 / ATH 2.4.9</strain>
    </source>
</reference>
<feature type="chain" id="PRO_0000386184" description="GTPase Obg">
    <location>
        <begin position="1"/>
        <end position="342"/>
    </location>
</feature>
<feature type="domain" description="Obg" evidence="2">
    <location>
        <begin position="1"/>
        <end position="159"/>
    </location>
</feature>
<feature type="domain" description="OBG-type G" evidence="1">
    <location>
        <begin position="160"/>
        <end position="327"/>
    </location>
</feature>
<feature type="binding site" evidence="1">
    <location>
        <begin position="166"/>
        <end position="173"/>
    </location>
    <ligand>
        <name>GTP</name>
        <dbReference type="ChEBI" id="CHEBI:37565"/>
    </ligand>
</feature>
<feature type="binding site" evidence="1">
    <location>
        <position position="173"/>
    </location>
    <ligand>
        <name>Mg(2+)</name>
        <dbReference type="ChEBI" id="CHEBI:18420"/>
    </ligand>
</feature>
<feature type="binding site" evidence="1">
    <location>
        <begin position="191"/>
        <end position="195"/>
    </location>
    <ligand>
        <name>GTP</name>
        <dbReference type="ChEBI" id="CHEBI:37565"/>
    </ligand>
</feature>
<feature type="binding site" evidence="1">
    <location>
        <position position="193"/>
    </location>
    <ligand>
        <name>Mg(2+)</name>
        <dbReference type="ChEBI" id="CHEBI:18420"/>
    </ligand>
</feature>
<feature type="binding site" evidence="1">
    <location>
        <begin position="212"/>
        <end position="215"/>
    </location>
    <ligand>
        <name>GTP</name>
        <dbReference type="ChEBI" id="CHEBI:37565"/>
    </ligand>
</feature>
<feature type="binding site" evidence="1">
    <location>
        <begin position="279"/>
        <end position="282"/>
    </location>
    <ligand>
        <name>GTP</name>
        <dbReference type="ChEBI" id="CHEBI:37565"/>
    </ligand>
</feature>
<feature type="binding site" evidence="1">
    <location>
        <begin position="308"/>
        <end position="310"/>
    </location>
    <ligand>
        <name>GTP</name>
        <dbReference type="ChEBI" id="CHEBI:37565"/>
    </ligand>
</feature>